<feature type="signal peptide" evidence="2">
    <location>
        <begin position="1"/>
        <end position="19"/>
    </location>
</feature>
<feature type="chain" id="PRO_0000415376" description="Inhibitor of carbonic anhydrase">
    <location>
        <begin position="20"/>
        <end position="700"/>
    </location>
</feature>
<feature type="domain" description="Transferrin-like 1" evidence="3">
    <location>
        <begin position="25"/>
        <end position="347"/>
    </location>
</feature>
<feature type="domain" description="Transferrin-like 2" evidence="3">
    <location>
        <begin position="355"/>
        <end position="685"/>
    </location>
</feature>
<feature type="glycosylation site" description="N-linked (GlcNAc...) asparagine" evidence="4">
    <location>
        <position position="664"/>
    </location>
</feature>
<feature type="disulfide bond" evidence="3 7">
    <location>
        <begin position="28"/>
        <end position="67"/>
    </location>
</feature>
<feature type="disulfide bond" evidence="3 7">
    <location>
        <begin position="38"/>
        <end position="58"/>
    </location>
</feature>
<feature type="disulfide bond" evidence="3 7">
    <location>
        <begin position="137"/>
        <end position="213"/>
    </location>
</feature>
<feature type="disulfide bond" evidence="3 7">
    <location>
        <begin position="172"/>
        <end position="188"/>
    </location>
</feature>
<feature type="disulfide bond" evidence="3 7">
    <location>
        <begin position="175"/>
        <end position="198"/>
    </location>
</feature>
<feature type="disulfide bond" evidence="3 7">
    <location>
        <begin position="185"/>
        <end position="196"/>
    </location>
</feature>
<feature type="disulfide bond" evidence="3 7">
    <location>
        <begin position="246"/>
        <end position="260"/>
    </location>
</feature>
<feature type="disulfide bond" evidence="3 7">
    <location>
        <begin position="358"/>
        <end position="390"/>
    </location>
</feature>
<feature type="disulfide bond" evidence="3 7">
    <location>
        <begin position="368"/>
        <end position="381"/>
    </location>
</feature>
<feature type="disulfide bond" evidence="3 7">
    <location>
        <begin position="415"/>
        <end position="695"/>
    </location>
</feature>
<feature type="disulfide bond" evidence="3 7">
    <location>
        <begin position="438"/>
        <end position="658"/>
    </location>
</feature>
<feature type="disulfide bond" evidence="3 7">
    <location>
        <begin position="470"/>
        <end position="545"/>
    </location>
</feature>
<feature type="disulfide bond" evidence="3 7">
    <location>
        <begin position="494"/>
        <end position="686"/>
    </location>
</feature>
<feature type="disulfide bond" evidence="3 7">
    <location>
        <begin position="504"/>
        <end position="518"/>
    </location>
</feature>
<feature type="disulfide bond" evidence="3 7">
    <location>
        <begin position="515"/>
        <end position="528"/>
    </location>
</feature>
<feature type="disulfide bond" evidence="3 7">
    <location>
        <begin position="585"/>
        <end position="599"/>
    </location>
</feature>
<feature type="mutagenesis site" description="Confers ability to bind ferric iron and carbonate; when associated with Y-207." evidence="6">
    <original>W</original>
    <variation>R</variation>
    <location>
        <position position="143"/>
    </location>
</feature>
<feature type="mutagenesis site" description="Confers ability to bind ferric iron and carbonate; when associated with R-143." evidence="6">
    <original>S</original>
    <variation>Y</variation>
    <location>
        <position position="207"/>
    </location>
</feature>
<feature type="strand" evidence="10">
    <location>
        <begin position="25"/>
        <end position="29"/>
    </location>
</feature>
<feature type="helix" evidence="10">
    <location>
        <begin position="33"/>
        <end position="48"/>
    </location>
</feature>
<feature type="strand" evidence="10">
    <location>
        <begin position="50"/>
        <end position="53"/>
    </location>
</feature>
<feature type="strand" evidence="10">
    <location>
        <begin position="56"/>
        <end position="60"/>
    </location>
</feature>
<feature type="helix" evidence="10">
    <location>
        <begin position="64"/>
        <end position="72"/>
    </location>
</feature>
<feature type="strand" evidence="10">
    <location>
        <begin position="78"/>
        <end position="81"/>
    </location>
</feature>
<feature type="helix" evidence="10">
    <location>
        <begin position="85"/>
        <end position="87"/>
    </location>
</feature>
<feature type="strand" evidence="10">
    <location>
        <begin position="96"/>
        <end position="105"/>
    </location>
</feature>
<feature type="strand" evidence="10">
    <location>
        <begin position="107"/>
        <end position="111"/>
    </location>
</feature>
<feature type="strand" evidence="10">
    <location>
        <begin position="113"/>
        <end position="121"/>
    </location>
</feature>
<feature type="turn" evidence="10">
    <location>
        <begin position="122"/>
        <end position="124"/>
    </location>
</feature>
<feature type="turn" evidence="10">
    <location>
        <begin position="128"/>
        <end position="133"/>
    </location>
</feature>
<feature type="strand" evidence="10">
    <location>
        <begin position="135"/>
        <end position="139"/>
    </location>
</feature>
<feature type="turn" evidence="10">
    <location>
        <begin position="144"/>
        <end position="147"/>
    </location>
</feature>
<feature type="helix" evidence="10">
    <location>
        <begin position="148"/>
        <end position="153"/>
    </location>
</feature>
<feature type="strand" evidence="10">
    <location>
        <begin position="161"/>
        <end position="163"/>
    </location>
</feature>
<feature type="helix" evidence="10">
    <location>
        <begin position="164"/>
        <end position="167"/>
    </location>
</feature>
<feature type="strand" evidence="10">
    <location>
        <begin position="168"/>
        <end position="172"/>
    </location>
</feature>
<feature type="turn" evidence="10">
    <location>
        <begin position="178"/>
        <end position="180"/>
    </location>
</feature>
<feature type="helix" evidence="10">
    <location>
        <begin position="182"/>
        <end position="184"/>
    </location>
</feature>
<feature type="strand" evidence="10">
    <location>
        <begin position="185"/>
        <end position="187"/>
    </location>
</feature>
<feature type="strand" evidence="10">
    <location>
        <begin position="202"/>
        <end position="204"/>
    </location>
</feature>
<feature type="helix" evidence="10">
    <location>
        <begin position="206"/>
        <end position="209"/>
    </location>
</feature>
<feature type="helix" evidence="10">
    <location>
        <begin position="212"/>
        <end position="215"/>
    </location>
</feature>
<feature type="strand" evidence="10">
    <location>
        <begin position="220"/>
        <end position="225"/>
    </location>
</feature>
<feature type="helix" evidence="10">
    <location>
        <begin position="226"/>
        <end position="229"/>
    </location>
</feature>
<feature type="helix" evidence="10">
    <location>
        <begin position="238"/>
        <end position="240"/>
    </location>
</feature>
<feature type="strand" evidence="10">
    <location>
        <begin position="242"/>
        <end position="245"/>
    </location>
</feature>
<feature type="strand" evidence="10">
    <location>
        <begin position="251"/>
        <end position="253"/>
    </location>
</feature>
<feature type="helix" evidence="10">
    <location>
        <begin position="257"/>
        <end position="259"/>
    </location>
</feature>
<feature type="strand" evidence="10">
    <location>
        <begin position="262"/>
        <end position="266"/>
    </location>
</feature>
<feature type="strand" evidence="10">
    <location>
        <begin position="269"/>
        <end position="277"/>
    </location>
</feature>
<feature type="helix" evidence="10">
    <location>
        <begin position="279"/>
        <end position="292"/>
    </location>
</feature>
<feature type="strand" evidence="10">
    <location>
        <begin position="293"/>
        <end position="300"/>
    </location>
</feature>
<feature type="strand" evidence="10">
    <location>
        <begin position="307"/>
        <end position="311"/>
    </location>
</feature>
<feature type="strand" evidence="10">
    <location>
        <begin position="320"/>
        <end position="323"/>
    </location>
</feature>
<feature type="helix" evidence="10">
    <location>
        <begin position="330"/>
        <end position="345"/>
    </location>
</feature>
<feature type="strand" evidence="10">
    <location>
        <begin position="355"/>
        <end position="362"/>
    </location>
</feature>
<feature type="helix" evidence="10">
    <location>
        <begin position="363"/>
        <end position="374"/>
    </location>
</feature>
<feature type="turn" evidence="10">
    <location>
        <begin position="375"/>
        <end position="377"/>
    </location>
</feature>
<feature type="strand" evidence="10">
    <location>
        <begin position="378"/>
        <end position="386"/>
    </location>
</feature>
<feature type="helix" evidence="10">
    <location>
        <begin position="387"/>
        <end position="396"/>
    </location>
</feature>
<feature type="strand" evidence="10">
    <location>
        <begin position="401"/>
        <end position="404"/>
    </location>
</feature>
<feature type="helix" evidence="10">
    <location>
        <begin position="406"/>
        <end position="414"/>
    </location>
</feature>
<feature type="strand" evidence="10">
    <location>
        <begin position="418"/>
        <end position="422"/>
    </location>
</feature>
<feature type="strand" evidence="10">
    <location>
        <begin position="446"/>
        <end position="455"/>
    </location>
</feature>
<feature type="strand" evidence="10">
    <location>
        <begin position="469"/>
        <end position="472"/>
    </location>
</feature>
<feature type="helix" evidence="10">
    <location>
        <begin position="477"/>
        <end position="481"/>
    </location>
</feature>
<feature type="helix" evidence="10">
    <location>
        <begin position="483"/>
        <end position="488"/>
    </location>
</feature>
<feature type="helix" evidence="10">
    <location>
        <begin position="496"/>
        <end position="499"/>
    </location>
</feature>
<feature type="strand" evidence="10">
    <location>
        <begin position="500"/>
        <end position="504"/>
    </location>
</feature>
<feature type="strand" evidence="10">
    <location>
        <begin position="515"/>
        <end position="517"/>
    </location>
</feature>
<feature type="strand" evidence="10">
    <location>
        <begin position="530"/>
        <end position="534"/>
    </location>
</feature>
<feature type="helix" evidence="10">
    <location>
        <begin position="538"/>
        <end position="548"/>
    </location>
</feature>
<feature type="strand" evidence="10">
    <location>
        <begin position="551"/>
        <end position="555"/>
    </location>
</feature>
<feature type="turn" evidence="10">
    <location>
        <begin position="561"/>
        <end position="563"/>
    </location>
</feature>
<feature type="helix" evidence="10">
    <location>
        <begin position="571"/>
        <end position="573"/>
    </location>
</feature>
<feature type="turn" evidence="10">
    <location>
        <begin position="578"/>
        <end position="580"/>
    </location>
</feature>
<feature type="strand" evidence="10">
    <location>
        <begin position="581"/>
        <end position="584"/>
    </location>
</feature>
<feature type="strand" evidence="10">
    <location>
        <begin position="586"/>
        <end position="588"/>
    </location>
</feature>
<feature type="strand" evidence="10">
    <location>
        <begin position="590"/>
        <end position="592"/>
    </location>
</feature>
<feature type="turn" evidence="10">
    <location>
        <begin position="596"/>
        <end position="598"/>
    </location>
</feature>
<feature type="strand" evidence="10">
    <location>
        <begin position="601"/>
        <end position="604"/>
    </location>
</feature>
<feature type="strand" evidence="10">
    <location>
        <begin position="608"/>
        <end position="611"/>
    </location>
</feature>
<feature type="strand" evidence="10">
    <location>
        <begin position="613"/>
        <end position="615"/>
    </location>
</feature>
<feature type="helix" evidence="10">
    <location>
        <begin position="616"/>
        <end position="630"/>
    </location>
</feature>
<feature type="strand" evidence="10">
    <location>
        <begin position="636"/>
        <end position="639"/>
    </location>
</feature>
<feature type="strand" evidence="10">
    <location>
        <begin position="646"/>
        <end position="648"/>
    </location>
</feature>
<feature type="strand" evidence="10">
    <location>
        <begin position="650"/>
        <end position="652"/>
    </location>
</feature>
<feature type="helix" evidence="10">
    <location>
        <begin position="668"/>
        <end position="679"/>
    </location>
</feature>
<feature type="helix" evidence="10">
    <location>
        <begin position="684"/>
        <end position="686"/>
    </location>
</feature>
<feature type="helix" evidence="10">
    <location>
        <begin position="690"/>
        <end position="695"/>
    </location>
</feature>
<reference key="1">
    <citation type="journal article" date="2005" name="Science">
        <title>The transcriptional landscape of the mammalian genome.</title>
        <authorList>
            <person name="Carninci P."/>
            <person name="Kasukawa T."/>
            <person name="Katayama S."/>
            <person name="Gough J."/>
            <person name="Frith M.C."/>
            <person name="Maeda N."/>
            <person name="Oyama R."/>
            <person name="Ravasi T."/>
            <person name="Lenhard B."/>
            <person name="Wells C."/>
            <person name="Kodzius R."/>
            <person name="Shimokawa K."/>
            <person name="Bajic V.B."/>
            <person name="Brenner S.E."/>
            <person name="Batalov S."/>
            <person name="Forrest A.R."/>
            <person name="Zavolan M."/>
            <person name="Davis M.J."/>
            <person name="Wilming L.G."/>
            <person name="Aidinis V."/>
            <person name="Allen J.E."/>
            <person name="Ambesi-Impiombato A."/>
            <person name="Apweiler R."/>
            <person name="Aturaliya R.N."/>
            <person name="Bailey T.L."/>
            <person name="Bansal M."/>
            <person name="Baxter L."/>
            <person name="Beisel K.W."/>
            <person name="Bersano T."/>
            <person name="Bono H."/>
            <person name="Chalk A.M."/>
            <person name="Chiu K.P."/>
            <person name="Choudhary V."/>
            <person name="Christoffels A."/>
            <person name="Clutterbuck D.R."/>
            <person name="Crowe M.L."/>
            <person name="Dalla E."/>
            <person name="Dalrymple B.P."/>
            <person name="de Bono B."/>
            <person name="Della Gatta G."/>
            <person name="di Bernardo D."/>
            <person name="Down T."/>
            <person name="Engstrom P."/>
            <person name="Fagiolini M."/>
            <person name="Faulkner G."/>
            <person name="Fletcher C.F."/>
            <person name="Fukushima T."/>
            <person name="Furuno M."/>
            <person name="Futaki S."/>
            <person name="Gariboldi M."/>
            <person name="Georgii-Hemming P."/>
            <person name="Gingeras T.R."/>
            <person name="Gojobori T."/>
            <person name="Green R.E."/>
            <person name="Gustincich S."/>
            <person name="Harbers M."/>
            <person name="Hayashi Y."/>
            <person name="Hensch T.K."/>
            <person name="Hirokawa N."/>
            <person name="Hill D."/>
            <person name="Huminiecki L."/>
            <person name="Iacono M."/>
            <person name="Ikeo K."/>
            <person name="Iwama A."/>
            <person name="Ishikawa T."/>
            <person name="Jakt M."/>
            <person name="Kanapin A."/>
            <person name="Katoh M."/>
            <person name="Kawasawa Y."/>
            <person name="Kelso J."/>
            <person name="Kitamura H."/>
            <person name="Kitano H."/>
            <person name="Kollias G."/>
            <person name="Krishnan S.P."/>
            <person name="Kruger A."/>
            <person name="Kummerfeld S.K."/>
            <person name="Kurochkin I.V."/>
            <person name="Lareau L.F."/>
            <person name="Lazarevic D."/>
            <person name="Lipovich L."/>
            <person name="Liu J."/>
            <person name="Liuni S."/>
            <person name="McWilliam S."/>
            <person name="Madan Babu M."/>
            <person name="Madera M."/>
            <person name="Marchionni L."/>
            <person name="Matsuda H."/>
            <person name="Matsuzawa S."/>
            <person name="Miki H."/>
            <person name="Mignone F."/>
            <person name="Miyake S."/>
            <person name="Morris K."/>
            <person name="Mottagui-Tabar S."/>
            <person name="Mulder N."/>
            <person name="Nakano N."/>
            <person name="Nakauchi H."/>
            <person name="Ng P."/>
            <person name="Nilsson R."/>
            <person name="Nishiguchi S."/>
            <person name="Nishikawa S."/>
            <person name="Nori F."/>
            <person name="Ohara O."/>
            <person name="Okazaki Y."/>
            <person name="Orlando V."/>
            <person name="Pang K.C."/>
            <person name="Pavan W.J."/>
            <person name="Pavesi G."/>
            <person name="Pesole G."/>
            <person name="Petrovsky N."/>
            <person name="Piazza S."/>
            <person name="Reed J."/>
            <person name="Reid J.F."/>
            <person name="Ring B.Z."/>
            <person name="Ringwald M."/>
            <person name="Rost B."/>
            <person name="Ruan Y."/>
            <person name="Salzberg S.L."/>
            <person name="Sandelin A."/>
            <person name="Schneider C."/>
            <person name="Schoenbach C."/>
            <person name="Sekiguchi K."/>
            <person name="Semple C.A."/>
            <person name="Seno S."/>
            <person name="Sessa L."/>
            <person name="Sheng Y."/>
            <person name="Shibata Y."/>
            <person name="Shimada H."/>
            <person name="Shimada K."/>
            <person name="Silva D."/>
            <person name="Sinclair B."/>
            <person name="Sperling S."/>
            <person name="Stupka E."/>
            <person name="Sugiura K."/>
            <person name="Sultana R."/>
            <person name="Takenaka Y."/>
            <person name="Taki K."/>
            <person name="Tammoja K."/>
            <person name="Tan S.L."/>
            <person name="Tang S."/>
            <person name="Taylor M.S."/>
            <person name="Tegner J."/>
            <person name="Teichmann S.A."/>
            <person name="Ueda H.R."/>
            <person name="van Nimwegen E."/>
            <person name="Verardo R."/>
            <person name="Wei C.L."/>
            <person name="Yagi K."/>
            <person name="Yamanishi H."/>
            <person name="Zabarovsky E."/>
            <person name="Zhu S."/>
            <person name="Zimmer A."/>
            <person name="Hide W."/>
            <person name="Bult C."/>
            <person name="Grimmond S.M."/>
            <person name="Teasdale R.D."/>
            <person name="Liu E.T."/>
            <person name="Brusic V."/>
            <person name="Quackenbush J."/>
            <person name="Wahlestedt C."/>
            <person name="Mattick J.S."/>
            <person name="Hume D.A."/>
            <person name="Kai C."/>
            <person name="Sasaki D."/>
            <person name="Tomaru Y."/>
            <person name="Fukuda S."/>
            <person name="Kanamori-Katayama M."/>
            <person name="Suzuki M."/>
            <person name="Aoki J."/>
            <person name="Arakawa T."/>
            <person name="Iida J."/>
            <person name="Imamura K."/>
            <person name="Itoh M."/>
            <person name="Kato T."/>
            <person name="Kawaji H."/>
            <person name="Kawagashira N."/>
            <person name="Kawashima T."/>
            <person name="Kojima M."/>
            <person name="Kondo S."/>
            <person name="Konno H."/>
            <person name="Nakano K."/>
            <person name="Ninomiya N."/>
            <person name="Nishio T."/>
            <person name="Okada M."/>
            <person name="Plessy C."/>
            <person name="Shibata K."/>
            <person name="Shiraki T."/>
            <person name="Suzuki S."/>
            <person name="Tagami M."/>
            <person name="Waki K."/>
            <person name="Watahiki A."/>
            <person name="Okamura-Oho Y."/>
            <person name="Suzuki H."/>
            <person name="Kawai J."/>
            <person name="Hayashizaki Y."/>
        </authorList>
    </citation>
    <scope>NUCLEOTIDE SEQUENCE [LARGE SCALE MRNA]</scope>
    <source>
        <strain>C57BL/6J</strain>
        <tissue>Liver</tissue>
    </source>
</reference>
<reference key="2">
    <citation type="journal article" date="2009" name="PLoS Biol.">
        <title>Lineage-specific biology revealed by a finished genome assembly of the mouse.</title>
        <authorList>
            <person name="Church D.M."/>
            <person name="Goodstadt L."/>
            <person name="Hillier L.W."/>
            <person name="Zody M.C."/>
            <person name="Goldstein S."/>
            <person name="She X."/>
            <person name="Bult C.J."/>
            <person name="Agarwala R."/>
            <person name="Cherry J.L."/>
            <person name="DiCuccio M."/>
            <person name="Hlavina W."/>
            <person name="Kapustin Y."/>
            <person name="Meric P."/>
            <person name="Maglott D."/>
            <person name="Birtle Z."/>
            <person name="Marques A.C."/>
            <person name="Graves T."/>
            <person name="Zhou S."/>
            <person name="Teague B."/>
            <person name="Potamousis K."/>
            <person name="Churas C."/>
            <person name="Place M."/>
            <person name="Herschleb J."/>
            <person name="Runnheim R."/>
            <person name="Forrest D."/>
            <person name="Amos-Landgraf J."/>
            <person name="Schwartz D.C."/>
            <person name="Cheng Z."/>
            <person name="Lindblad-Toh K."/>
            <person name="Eichler E.E."/>
            <person name="Ponting C.P."/>
        </authorList>
    </citation>
    <scope>NUCLEOTIDE SEQUENCE [LARGE SCALE GENOMIC DNA]</scope>
    <source>
        <strain>C57BL/6J</strain>
    </source>
</reference>
<reference key="3">
    <citation type="journal article" date="2007" name="Biochem. J.">
        <title>A novel murine protein with no effect on iron homoeostasis is homologous with transferrin and is the putative inhibitor of carbonic anhydrase.</title>
        <authorList>
            <person name="Wang F."/>
            <person name="Lothrop A.P."/>
            <person name="James N.G."/>
            <person name="Griffiths T.A."/>
            <person name="Lambert L.A."/>
            <person name="Leverence R."/>
            <person name="Kaltashov I.A."/>
            <person name="Andrews N.C."/>
            <person name="MacGillivray R.T."/>
            <person name="Mason A.B."/>
        </authorList>
    </citation>
    <scope>IDENTIFICATION</scope>
    <scope>FUNCTION</scope>
    <scope>LACK OF IRON BINDING</scope>
    <scope>GLYCOSYLATION</scope>
    <scope>SUBCELLULAR LOCATION</scope>
    <scope>TISSUE SPECIFICITY</scope>
    <scope>IDENTIFICATION BY MASS SPECTROMETRY</scope>
</reference>
<reference key="4">
    <citation type="journal article" date="2007" name="J. Proteome Res.">
        <title>Enhanced analysis of the mouse plasma proteome using cysteine-containing tryptic glycopeptides.</title>
        <authorList>
            <person name="Bernhard O.K."/>
            <person name="Kapp E.A."/>
            <person name="Simpson R.J."/>
        </authorList>
    </citation>
    <scope>GLYCOSYLATION [LARGE SCALE ANALYSIS] AT ASN-664</scope>
    <source>
        <strain>C57BL/6J</strain>
        <tissue>Plasma</tissue>
    </source>
</reference>
<reference key="5">
    <citation type="journal article" date="2008" name="Biochemistry">
        <title>Evolution reversed: the ability to bind iron restored to the N-lobe of the murine inhibitor of carbonic anhydrase by strategic mutagenesis.</title>
        <authorList>
            <person name="Mason A.B."/>
            <person name="Judson G.L."/>
            <person name="Bravo M.C."/>
            <person name="Edelstein A."/>
            <person name="Byrne S.L."/>
            <person name="James N.G."/>
            <person name="Roush E.D."/>
            <person name="Fierke C.A."/>
            <person name="Bobst C.E."/>
            <person name="Kaltashov I.A."/>
            <person name="Daughtery M.A."/>
        </authorList>
    </citation>
    <scope>FUNCTION</scope>
    <scope>INTERACTION WITH CA2</scope>
    <scope>MUTAGENESIS OF TRP-143 AND SER-207</scope>
    <scope>GLYCOSYLATION</scope>
    <scope>IDENTIFICATION BY MASS SPECTROMETRY</scope>
</reference>
<reference key="6">
    <citation type="journal article" date="2010" name="Cell">
        <title>A tissue-specific atlas of mouse protein phosphorylation and expression.</title>
        <authorList>
            <person name="Huttlin E.L."/>
            <person name="Jedrychowski M.P."/>
            <person name="Elias J.E."/>
            <person name="Goswami T."/>
            <person name="Rad R."/>
            <person name="Beausoleil S.A."/>
            <person name="Villen J."/>
            <person name="Haas W."/>
            <person name="Sowa M.E."/>
            <person name="Gygi S.P."/>
        </authorList>
    </citation>
    <scope>IDENTIFICATION BY MASS SPECTROMETRY [LARGE SCALE ANALYSIS]</scope>
    <source>
        <tissue>Brown adipose tissue</tissue>
        <tissue>Heart</tissue>
        <tissue>Kidney</tissue>
        <tissue>Liver</tissue>
        <tissue>Lung</tissue>
        <tissue>Spleen</tissue>
        <tissue>Testis</tissue>
    </source>
</reference>
<reference key="7">
    <citation type="journal article" date="2010" name="Protein Sci.">
        <title>The structure and evolution of the murine inhibitor of carbonic anhydrase: a member of the transferrin superfamily.</title>
        <authorList>
            <person name="Eckenroth B.E."/>
            <person name="Mason A.B."/>
            <person name="McDevitt M.E."/>
            <person name="Lambert L.A."/>
            <person name="Everse S.J."/>
        </authorList>
    </citation>
    <scope>X-RAY CRYSTALLOGRAPHY (2.40 ANGSTROMS) OF 20-700</scope>
    <scope>SUBUNIT</scope>
    <scope>DISULFIDE BONDS</scope>
</reference>
<name>ICA_MOUSE</name>
<accession>Q9DBD0</accession>
<gene>
    <name evidence="9" type="primary">Inhca</name>
    <name evidence="8" type="synonym">Ica</name>
</gene>
<keyword id="KW-0002">3D-structure</keyword>
<keyword id="KW-1015">Disulfide bond</keyword>
<keyword id="KW-0325">Glycoprotein</keyword>
<keyword id="KW-1185">Reference proteome</keyword>
<keyword id="KW-0677">Repeat</keyword>
<keyword id="KW-0964">Secreted</keyword>
<keyword id="KW-0732">Signal</keyword>
<sequence length="700" mass="76766">MRLLICALLCLGTLGLCLALPEKTIRWCVVSDHEATKCSSFRDNMKKVLPAGGPAVTCVRKMSHPECIRDISANKVDAVTVDGALVAEADLPHHSLKPIMAEYYGSKDDPKTHYYVVAMAKKGTGFQLNQLRGKKSCHTGLGWSAGWYVPLSTLLPSGSRETAAATFFSSSCVPCADGKMFPSLCQLCAGKGTDKCACSSREPYFGSWGALKCLQDGTADVSFVKHLTVFEAMPTKADRDQYELLCMDNTRRPVEEYEQCYLARVPSHVVVARSVDGKEDSIQELLRVAQEHFGKDKSSPFQLFGSPHGEDLLFTDAAHGLLRVPRKIDISLYLGYEFLSAFRNLKRGLEDSQRVKWCAVGQQERTKCDQWSAVSGGALACATEETPEDCIAATMKGEADAMSLDGGFAYVAGHCGLVPVLAENYLSTHSSGRLGSKCVNAPLEGYYVVAVVKKSDVGITWKSLQGKKSCHTAVGTSEGWNVPMGLIYNQTGSCKFDAFFSRSCAPGSDPDSPLCALCVGGNNPAHMCAANNAEGYHGSSGALRCLVEKGDVAFMKHPTVLQNTDGKNPEPWAKGLKHEDFELLCLDGTRKPVTEAQSCHLARVPNRAVFSRKDKADFVRRILFNQQELFGRNGFEYMMFQMFESSAKDLLFSDDTECLSNLQNKTTYKTYLGPQYLTLMDNFRQCLSSELLDACTFHKY</sequence>
<comment type="function">
    <text evidence="1 5 6">Inhibitor for carbonic anhydrase 2 (CA2) (By similarity). Does not bind iron ions (PubMed:17511619, PubMed:18712936).</text>
</comment>
<comment type="subunit">
    <text evidence="6 7">Monomer (PubMed:20572014). Interacts (via transferrin-like domain 2) with CA2 (PubMed:18712936).</text>
</comment>
<comment type="subcellular location">
    <subcellularLocation>
        <location evidence="5">Secreted</location>
    </subcellularLocation>
</comment>
<comment type="tissue specificity">
    <text evidence="5">Detected in blood plasma, heart, kidney, liver, colon, lung, spleen, pancreas and testis (at protein level).</text>
</comment>
<comment type="PTM">
    <text evidence="4 5 6">N-glycosylated.</text>
</comment>
<comment type="similarity">
    <text evidence="3">Belongs to the transferrin family.</text>
</comment>
<dbReference type="EMBL" id="AC122747">
    <property type="status" value="NOT_ANNOTATED_CDS"/>
    <property type="molecule type" value="Genomic_DNA"/>
</dbReference>
<dbReference type="EMBL" id="AK005035">
    <property type="protein sequence ID" value="BAB23762.1"/>
    <property type="molecule type" value="mRNA"/>
</dbReference>
<dbReference type="CCDS" id="CCDS23452.1"/>
<dbReference type="RefSeq" id="NP_082194.1">
    <property type="nucleotide sequence ID" value="NM_027918.2"/>
</dbReference>
<dbReference type="PDB" id="3MC2">
    <property type="method" value="X-ray"/>
    <property type="resolution" value="2.40 A"/>
    <property type="chains" value="A/B/C/D=20-700"/>
</dbReference>
<dbReference type="PDBsum" id="3MC2"/>
<dbReference type="SMR" id="Q9DBD0"/>
<dbReference type="FunCoup" id="Q9DBD0">
    <property type="interactions" value="268"/>
</dbReference>
<dbReference type="STRING" id="10090.ENSMUSP00000035163"/>
<dbReference type="MEROPS" id="S60.977"/>
<dbReference type="MEROPS" id="S60.979"/>
<dbReference type="GlyConnect" id="700">
    <property type="glycosylation" value="1 N-Linked glycan (1 site)"/>
</dbReference>
<dbReference type="GlyCosmos" id="Q9DBD0">
    <property type="glycosylation" value="1 site, 2 glycans"/>
</dbReference>
<dbReference type="GlyGen" id="Q9DBD0">
    <property type="glycosylation" value="2 sites, 2 N-linked glycans (1 site), 1 O-linked glycan (1 site)"/>
</dbReference>
<dbReference type="iPTMnet" id="Q9DBD0"/>
<dbReference type="PhosphoSitePlus" id="Q9DBD0"/>
<dbReference type="SwissPalm" id="Q9DBD0"/>
<dbReference type="CPTAC" id="non-CPTAC-3549"/>
<dbReference type="jPOST" id="Q9DBD0"/>
<dbReference type="PaxDb" id="10090-ENSMUSP00000035163"/>
<dbReference type="PeptideAtlas" id="Q9DBD0"/>
<dbReference type="ProteomicsDB" id="269524"/>
<dbReference type="DNASU" id="71775"/>
<dbReference type="Ensembl" id="ENSMUST00000035163.10">
    <property type="protein sequence ID" value="ENSMUSP00000035163.4"/>
    <property type="gene ID" value="ENSMUSG00000033688.11"/>
</dbReference>
<dbReference type="GeneID" id="71775"/>
<dbReference type="KEGG" id="mmu:71775"/>
<dbReference type="UCSC" id="uc009rgk.1">
    <property type="organism name" value="mouse"/>
</dbReference>
<dbReference type="AGR" id="MGI:1919025"/>
<dbReference type="CTD" id="71775"/>
<dbReference type="MGI" id="MGI:1919025">
    <property type="gene designation" value="Inhca"/>
</dbReference>
<dbReference type="VEuPathDB" id="HostDB:ENSMUSG00000033688"/>
<dbReference type="eggNOG" id="ENOG502QT0C">
    <property type="taxonomic scope" value="Eukaryota"/>
</dbReference>
<dbReference type="GeneTree" id="ENSGT00940000163596"/>
<dbReference type="HOGENOM" id="CLU_011309_1_0_1"/>
<dbReference type="InParanoid" id="Q9DBD0"/>
<dbReference type="OMA" id="RVQWCAV"/>
<dbReference type="OrthoDB" id="9981115at2759"/>
<dbReference type="PhylomeDB" id="Q9DBD0"/>
<dbReference type="TreeFam" id="TF324013"/>
<dbReference type="BioGRID-ORCS" id="71775">
    <property type="hits" value="4 hits in 77 CRISPR screens"/>
</dbReference>
<dbReference type="EvolutionaryTrace" id="Q9DBD0"/>
<dbReference type="PRO" id="PR:Q9DBD0"/>
<dbReference type="Proteomes" id="UP000000589">
    <property type="component" value="Chromosome 9"/>
</dbReference>
<dbReference type="RNAct" id="Q9DBD0">
    <property type="molecule type" value="protein"/>
</dbReference>
<dbReference type="Bgee" id="ENSMUSG00000033688">
    <property type="expression patterns" value="Expressed in left lobe of liver and 91 other cell types or tissues"/>
</dbReference>
<dbReference type="ExpressionAtlas" id="Q9DBD0">
    <property type="expression patterns" value="baseline and differential"/>
</dbReference>
<dbReference type="GO" id="GO:0005615">
    <property type="term" value="C:extracellular space"/>
    <property type="evidence" value="ECO:0007669"/>
    <property type="project" value="InterPro"/>
</dbReference>
<dbReference type="GO" id="GO:0004857">
    <property type="term" value="F:enzyme inhibitor activity"/>
    <property type="evidence" value="ECO:0000314"/>
    <property type="project" value="MGI"/>
</dbReference>
<dbReference type="CDD" id="cd13617">
    <property type="entry name" value="PBP2_transferrin_C"/>
    <property type="match status" value="1"/>
</dbReference>
<dbReference type="CDD" id="cd13618">
    <property type="entry name" value="PBP2_transferrin_N"/>
    <property type="match status" value="1"/>
</dbReference>
<dbReference type="FunFam" id="3.40.190.10:FF:000095">
    <property type="entry name" value="Lactotransferrin"/>
    <property type="match status" value="2"/>
</dbReference>
<dbReference type="Gene3D" id="3.40.190.10">
    <property type="entry name" value="Periplasmic binding protein-like II"/>
    <property type="match status" value="4"/>
</dbReference>
<dbReference type="InterPro" id="IPR016357">
    <property type="entry name" value="Transferrin"/>
</dbReference>
<dbReference type="InterPro" id="IPR001156">
    <property type="entry name" value="Transferrin-like_dom"/>
</dbReference>
<dbReference type="InterPro" id="IPR018195">
    <property type="entry name" value="Transferrin_Fe_BS"/>
</dbReference>
<dbReference type="PANTHER" id="PTHR11485:SF20">
    <property type="entry name" value="INHIBITOR OF CARBONIC ANHYDRASE"/>
    <property type="match status" value="1"/>
</dbReference>
<dbReference type="PANTHER" id="PTHR11485">
    <property type="entry name" value="TRANSFERRIN"/>
    <property type="match status" value="1"/>
</dbReference>
<dbReference type="Pfam" id="PF00405">
    <property type="entry name" value="Transferrin"/>
    <property type="match status" value="2"/>
</dbReference>
<dbReference type="PIRSF" id="PIRSF002549">
    <property type="entry name" value="Transferrin"/>
    <property type="match status" value="1"/>
</dbReference>
<dbReference type="PRINTS" id="PR00422">
    <property type="entry name" value="TRANSFERRIN"/>
</dbReference>
<dbReference type="SMART" id="SM00094">
    <property type="entry name" value="TR_FER"/>
    <property type="match status" value="2"/>
</dbReference>
<dbReference type="SUPFAM" id="SSF53850">
    <property type="entry name" value="Periplasmic binding protein-like II"/>
    <property type="match status" value="2"/>
</dbReference>
<dbReference type="PROSITE" id="PS00205">
    <property type="entry name" value="TRANSFERRIN_LIKE_1"/>
    <property type="match status" value="1"/>
</dbReference>
<dbReference type="PROSITE" id="PS00207">
    <property type="entry name" value="TRANSFERRIN_LIKE_3"/>
    <property type="match status" value="1"/>
</dbReference>
<dbReference type="PROSITE" id="PS51408">
    <property type="entry name" value="TRANSFERRIN_LIKE_4"/>
    <property type="match status" value="2"/>
</dbReference>
<evidence type="ECO:0000250" key="1">
    <source>
        <dbReference type="UniProtKB" id="Q29545"/>
    </source>
</evidence>
<evidence type="ECO:0000255" key="2"/>
<evidence type="ECO:0000255" key="3">
    <source>
        <dbReference type="PROSITE-ProRule" id="PRU00741"/>
    </source>
</evidence>
<evidence type="ECO:0000269" key="4">
    <source>
    </source>
</evidence>
<evidence type="ECO:0000269" key="5">
    <source>
    </source>
</evidence>
<evidence type="ECO:0000269" key="6">
    <source>
    </source>
</evidence>
<evidence type="ECO:0000269" key="7">
    <source>
    </source>
</evidence>
<evidence type="ECO:0000303" key="8">
    <source>
    </source>
</evidence>
<evidence type="ECO:0000312" key="9">
    <source>
        <dbReference type="MGI" id="MGI:1919025"/>
    </source>
</evidence>
<evidence type="ECO:0007829" key="10">
    <source>
        <dbReference type="PDB" id="3MC2"/>
    </source>
</evidence>
<protein>
    <recommendedName>
        <fullName evidence="9">Inhibitor of carbonic anhydrase</fullName>
    </recommendedName>
</protein>
<proteinExistence type="evidence at protein level"/>
<organism>
    <name type="scientific">Mus musculus</name>
    <name type="common">Mouse</name>
    <dbReference type="NCBI Taxonomy" id="10090"/>
    <lineage>
        <taxon>Eukaryota</taxon>
        <taxon>Metazoa</taxon>
        <taxon>Chordata</taxon>
        <taxon>Craniata</taxon>
        <taxon>Vertebrata</taxon>
        <taxon>Euteleostomi</taxon>
        <taxon>Mammalia</taxon>
        <taxon>Eutheria</taxon>
        <taxon>Euarchontoglires</taxon>
        <taxon>Glires</taxon>
        <taxon>Rodentia</taxon>
        <taxon>Myomorpha</taxon>
        <taxon>Muroidea</taxon>
        <taxon>Muridae</taxon>
        <taxon>Murinae</taxon>
        <taxon>Mus</taxon>
        <taxon>Mus</taxon>
    </lineage>
</organism>